<reference key="1">
    <citation type="journal article" date="2000" name="Science">
        <title>The genome sequence of Drosophila melanogaster.</title>
        <authorList>
            <person name="Adams M.D."/>
            <person name="Celniker S.E."/>
            <person name="Holt R.A."/>
            <person name="Evans C.A."/>
            <person name="Gocayne J.D."/>
            <person name="Amanatides P.G."/>
            <person name="Scherer S.E."/>
            <person name="Li P.W."/>
            <person name="Hoskins R.A."/>
            <person name="Galle R.F."/>
            <person name="George R.A."/>
            <person name="Lewis S.E."/>
            <person name="Richards S."/>
            <person name="Ashburner M."/>
            <person name="Henderson S.N."/>
            <person name="Sutton G.G."/>
            <person name="Wortman J.R."/>
            <person name="Yandell M.D."/>
            <person name="Zhang Q."/>
            <person name="Chen L.X."/>
            <person name="Brandon R.C."/>
            <person name="Rogers Y.-H.C."/>
            <person name="Blazej R.G."/>
            <person name="Champe M."/>
            <person name="Pfeiffer B.D."/>
            <person name="Wan K.H."/>
            <person name="Doyle C."/>
            <person name="Baxter E.G."/>
            <person name="Helt G."/>
            <person name="Nelson C.R."/>
            <person name="Miklos G.L.G."/>
            <person name="Abril J.F."/>
            <person name="Agbayani A."/>
            <person name="An H.-J."/>
            <person name="Andrews-Pfannkoch C."/>
            <person name="Baldwin D."/>
            <person name="Ballew R.M."/>
            <person name="Basu A."/>
            <person name="Baxendale J."/>
            <person name="Bayraktaroglu L."/>
            <person name="Beasley E.M."/>
            <person name="Beeson K.Y."/>
            <person name="Benos P.V."/>
            <person name="Berman B.P."/>
            <person name="Bhandari D."/>
            <person name="Bolshakov S."/>
            <person name="Borkova D."/>
            <person name="Botchan M.R."/>
            <person name="Bouck J."/>
            <person name="Brokstein P."/>
            <person name="Brottier P."/>
            <person name="Burtis K.C."/>
            <person name="Busam D.A."/>
            <person name="Butler H."/>
            <person name="Cadieu E."/>
            <person name="Center A."/>
            <person name="Chandra I."/>
            <person name="Cherry J.M."/>
            <person name="Cawley S."/>
            <person name="Dahlke C."/>
            <person name="Davenport L.B."/>
            <person name="Davies P."/>
            <person name="de Pablos B."/>
            <person name="Delcher A."/>
            <person name="Deng Z."/>
            <person name="Mays A.D."/>
            <person name="Dew I."/>
            <person name="Dietz S.M."/>
            <person name="Dodson K."/>
            <person name="Doup L.E."/>
            <person name="Downes M."/>
            <person name="Dugan-Rocha S."/>
            <person name="Dunkov B.C."/>
            <person name="Dunn P."/>
            <person name="Durbin K.J."/>
            <person name="Evangelista C.C."/>
            <person name="Ferraz C."/>
            <person name="Ferriera S."/>
            <person name="Fleischmann W."/>
            <person name="Fosler C."/>
            <person name="Gabrielian A.E."/>
            <person name="Garg N.S."/>
            <person name="Gelbart W.M."/>
            <person name="Glasser K."/>
            <person name="Glodek A."/>
            <person name="Gong F."/>
            <person name="Gorrell J.H."/>
            <person name="Gu Z."/>
            <person name="Guan P."/>
            <person name="Harris M."/>
            <person name="Harris N.L."/>
            <person name="Harvey D.A."/>
            <person name="Heiman T.J."/>
            <person name="Hernandez J.R."/>
            <person name="Houck J."/>
            <person name="Hostin D."/>
            <person name="Houston K.A."/>
            <person name="Howland T.J."/>
            <person name="Wei M.-H."/>
            <person name="Ibegwam C."/>
            <person name="Jalali M."/>
            <person name="Kalush F."/>
            <person name="Karpen G.H."/>
            <person name="Ke Z."/>
            <person name="Kennison J.A."/>
            <person name="Ketchum K.A."/>
            <person name="Kimmel B.E."/>
            <person name="Kodira C.D."/>
            <person name="Kraft C.L."/>
            <person name="Kravitz S."/>
            <person name="Kulp D."/>
            <person name="Lai Z."/>
            <person name="Lasko P."/>
            <person name="Lei Y."/>
            <person name="Levitsky A.A."/>
            <person name="Li J.H."/>
            <person name="Li Z."/>
            <person name="Liang Y."/>
            <person name="Lin X."/>
            <person name="Liu X."/>
            <person name="Mattei B."/>
            <person name="McIntosh T.C."/>
            <person name="McLeod M.P."/>
            <person name="McPherson D."/>
            <person name="Merkulov G."/>
            <person name="Milshina N.V."/>
            <person name="Mobarry C."/>
            <person name="Morris J."/>
            <person name="Moshrefi A."/>
            <person name="Mount S.M."/>
            <person name="Moy M."/>
            <person name="Murphy B."/>
            <person name="Murphy L."/>
            <person name="Muzny D.M."/>
            <person name="Nelson D.L."/>
            <person name="Nelson D.R."/>
            <person name="Nelson K.A."/>
            <person name="Nixon K."/>
            <person name="Nusskern D.R."/>
            <person name="Pacleb J.M."/>
            <person name="Palazzolo M."/>
            <person name="Pittman G.S."/>
            <person name="Pan S."/>
            <person name="Pollard J."/>
            <person name="Puri V."/>
            <person name="Reese M.G."/>
            <person name="Reinert K."/>
            <person name="Remington K."/>
            <person name="Saunders R.D.C."/>
            <person name="Scheeler F."/>
            <person name="Shen H."/>
            <person name="Shue B.C."/>
            <person name="Siden-Kiamos I."/>
            <person name="Simpson M."/>
            <person name="Skupski M.P."/>
            <person name="Smith T.J."/>
            <person name="Spier E."/>
            <person name="Spradling A.C."/>
            <person name="Stapleton M."/>
            <person name="Strong R."/>
            <person name="Sun E."/>
            <person name="Svirskas R."/>
            <person name="Tector C."/>
            <person name="Turner R."/>
            <person name="Venter E."/>
            <person name="Wang A.H."/>
            <person name="Wang X."/>
            <person name="Wang Z.-Y."/>
            <person name="Wassarman D.A."/>
            <person name="Weinstock G.M."/>
            <person name="Weissenbach J."/>
            <person name="Williams S.M."/>
            <person name="Woodage T."/>
            <person name="Worley K.C."/>
            <person name="Wu D."/>
            <person name="Yang S."/>
            <person name="Yao Q.A."/>
            <person name="Ye J."/>
            <person name="Yeh R.-F."/>
            <person name="Zaveri J.S."/>
            <person name="Zhan M."/>
            <person name="Zhang G."/>
            <person name="Zhao Q."/>
            <person name="Zheng L."/>
            <person name="Zheng X.H."/>
            <person name="Zhong F.N."/>
            <person name="Zhong W."/>
            <person name="Zhou X."/>
            <person name="Zhu S.C."/>
            <person name="Zhu X."/>
            <person name="Smith H.O."/>
            <person name="Gibbs R.A."/>
            <person name="Myers E.W."/>
            <person name="Rubin G.M."/>
            <person name="Venter J.C."/>
        </authorList>
    </citation>
    <scope>NUCLEOTIDE SEQUENCE [LARGE SCALE GENOMIC DNA]</scope>
    <source>
        <strain>Berkeley</strain>
    </source>
</reference>
<reference evidence="7 9" key="2">
    <citation type="journal article" date="2002" name="Genome Biol.">
        <title>Annotation of the Drosophila melanogaster euchromatic genome: a systematic review.</title>
        <authorList>
            <person name="Misra S."/>
            <person name="Crosby M.A."/>
            <person name="Mungall C.J."/>
            <person name="Matthews B.B."/>
            <person name="Campbell K.S."/>
            <person name="Hradecky P."/>
            <person name="Huang Y."/>
            <person name="Kaminker J.S."/>
            <person name="Millburn G.H."/>
            <person name="Prochnik S.E."/>
            <person name="Smith C.D."/>
            <person name="Tupy J.L."/>
            <person name="Whitfield E.J."/>
            <person name="Bayraktaroglu L."/>
            <person name="Berman B.P."/>
            <person name="Bettencourt B.R."/>
            <person name="Celniker S.E."/>
            <person name="de Grey A.D.N.J."/>
            <person name="Drysdale R.A."/>
            <person name="Harris N.L."/>
            <person name="Richter J."/>
            <person name="Russo S."/>
            <person name="Schroeder A.J."/>
            <person name="Shu S.Q."/>
            <person name="Stapleton M."/>
            <person name="Yamada C."/>
            <person name="Ashburner M."/>
            <person name="Gelbart W.M."/>
            <person name="Rubin G.M."/>
            <person name="Lewis S.E."/>
        </authorList>
    </citation>
    <scope>GENOME REANNOTATION</scope>
    <source>
        <strain evidence="9">Berkeley</strain>
    </source>
</reference>
<reference key="3">
    <citation type="journal article" date="2002" name="Genome Biol.">
        <title>A Drosophila full-length cDNA resource.</title>
        <authorList>
            <person name="Stapleton M."/>
            <person name="Carlson J.W."/>
            <person name="Brokstein P."/>
            <person name="Yu C."/>
            <person name="Champe M."/>
            <person name="George R.A."/>
            <person name="Guarin H."/>
            <person name="Kronmiller B."/>
            <person name="Pacleb J.M."/>
            <person name="Park S."/>
            <person name="Wan K.H."/>
            <person name="Rubin G.M."/>
            <person name="Celniker S.E."/>
        </authorList>
    </citation>
    <scope>NUCLEOTIDE SEQUENCE [LARGE SCALE MRNA]</scope>
    <source>
        <strain>Berkeley</strain>
        <tissue>Embryo</tissue>
    </source>
</reference>
<reference key="4">
    <citation type="journal article" date="2006" name="J. Biol. Chem.">
        <title>Phospholipid transfer activity of microsomal triacylglycerol transfer protein is sufficient for the assembly and secretion of apolipoprotein B lipoproteins.</title>
        <authorList>
            <person name="Rava P."/>
            <person name="Ojakian G.K."/>
            <person name="Shelness G.S."/>
            <person name="Hussain M.M."/>
        </authorList>
    </citation>
    <scope>FUNCTION</scope>
    <scope>CATALYTIC ACTIVITY</scope>
    <scope>SUBCELLULAR LOCATION</scope>
</reference>
<dbReference type="EMBL" id="AE014134">
    <property type="protein sequence ID" value="AAF53946.2"/>
    <property type="molecule type" value="Genomic_DNA"/>
</dbReference>
<dbReference type="EMBL" id="AY050228">
    <property type="protein sequence ID" value="AAK84927.1"/>
    <property type="molecule type" value="mRNA"/>
</dbReference>
<dbReference type="RefSeq" id="NP_610075.2">
    <property type="nucleotide sequence ID" value="NM_136231.4"/>
</dbReference>
<dbReference type="SMR" id="Q9VIH3"/>
<dbReference type="FunCoup" id="Q9VIH3">
    <property type="interactions" value="444"/>
</dbReference>
<dbReference type="IntAct" id="Q9VIH3">
    <property type="interactions" value="6"/>
</dbReference>
<dbReference type="STRING" id="7227.FBpp0080968"/>
<dbReference type="SwissLipids" id="SLP:000000412"/>
<dbReference type="GlyCosmos" id="Q9VIH3">
    <property type="glycosylation" value="4 sites, No reported glycans"/>
</dbReference>
<dbReference type="GlyGen" id="Q9VIH3">
    <property type="glycosylation" value="5 sites"/>
</dbReference>
<dbReference type="PaxDb" id="7227-FBpp0080968"/>
<dbReference type="EnsemblMetazoa" id="FBtr0081439">
    <property type="protein sequence ID" value="FBpp0080968"/>
    <property type="gene ID" value="FBgn0266369"/>
</dbReference>
<dbReference type="GeneID" id="35362"/>
<dbReference type="KEGG" id="dme:Dmel_CG9342"/>
<dbReference type="UCSC" id="CG9342-RA">
    <property type="organism name" value="d. melanogaster"/>
</dbReference>
<dbReference type="AGR" id="FB:FBgn0266369"/>
<dbReference type="CTD" id="35362"/>
<dbReference type="FlyBase" id="FBgn0266369">
    <property type="gene designation" value="Mtp"/>
</dbReference>
<dbReference type="VEuPathDB" id="VectorBase:FBgn0266369"/>
<dbReference type="eggNOG" id="KOG4337">
    <property type="taxonomic scope" value="Eukaryota"/>
</dbReference>
<dbReference type="GeneTree" id="ENSGT00390000011412"/>
<dbReference type="HOGENOM" id="CLU_014703_0_0_1"/>
<dbReference type="InParanoid" id="Q9VIH3"/>
<dbReference type="OMA" id="HVWGGSA"/>
<dbReference type="OrthoDB" id="5865932at2759"/>
<dbReference type="PhylomeDB" id="Q9VIH3"/>
<dbReference type="Reactome" id="R-DME-8964041">
    <property type="pathway name" value="LDL remodeling"/>
</dbReference>
<dbReference type="BioGRID-ORCS" id="35362">
    <property type="hits" value="0 hits in 3 CRISPR screens"/>
</dbReference>
<dbReference type="GenomeRNAi" id="35362"/>
<dbReference type="PRO" id="PR:Q9VIH3"/>
<dbReference type="Proteomes" id="UP000000803">
    <property type="component" value="Chromosome 2L"/>
</dbReference>
<dbReference type="Bgee" id="FBgn0266369">
    <property type="expression patterns" value="Expressed in fat body cell in Malpighian tubule and 45 other cell types or tissues"/>
</dbReference>
<dbReference type="ExpressionAtlas" id="Q9VIH3">
    <property type="expression patterns" value="baseline and differential"/>
</dbReference>
<dbReference type="GO" id="GO:0016323">
    <property type="term" value="C:basolateral plasma membrane"/>
    <property type="evidence" value="ECO:0000318"/>
    <property type="project" value="GO_Central"/>
</dbReference>
<dbReference type="GO" id="GO:0012505">
    <property type="term" value="C:endomembrane system"/>
    <property type="evidence" value="ECO:0007005"/>
    <property type="project" value="FlyBase"/>
</dbReference>
<dbReference type="GO" id="GO:0005783">
    <property type="term" value="C:endoplasmic reticulum"/>
    <property type="evidence" value="ECO:0000318"/>
    <property type="project" value="GO_Central"/>
</dbReference>
<dbReference type="GO" id="GO:0005794">
    <property type="term" value="C:Golgi apparatus"/>
    <property type="evidence" value="ECO:0000318"/>
    <property type="project" value="GO_Central"/>
</dbReference>
<dbReference type="GO" id="GO:0008289">
    <property type="term" value="F:lipid binding"/>
    <property type="evidence" value="ECO:0007669"/>
    <property type="project" value="InterPro"/>
</dbReference>
<dbReference type="GO" id="GO:0008525">
    <property type="term" value="F:phosphatidylcholine transporter activity"/>
    <property type="evidence" value="ECO:0000314"/>
    <property type="project" value="FlyBase"/>
</dbReference>
<dbReference type="GO" id="GO:0005548">
    <property type="term" value="F:phospholipid transporter activity"/>
    <property type="evidence" value="ECO:0000318"/>
    <property type="project" value="GO_Central"/>
</dbReference>
<dbReference type="GO" id="GO:0048813">
    <property type="term" value="P:dendrite morphogenesis"/>
    <property type="evidence" value="ECO:0000315"/>
    <property type="project" value="FlyBase"/>
</dbReference>
<dbReference type="GO" id="GO:0042157">
    <property type="term" value="P:lipoprotein metabolic process"/>
    <property type="evidence" value="ECO:0000315"/>
    <property type="project" value="FlyBase"/>
</dbReference>
<dbReference type="GO" id="GO:0035149">
    <property type="term" value="P:lumen formation, open tracheal system"/>
    <property type="evidence" value="ECO:0000315"/>
    <property type="project" value="FlyBase"/>
</dbReference>
<dbReference type="GO" id="GO:0008039">
    <property type="term" value="P:synaptic target recognition"/>
    <property type="evidence" value="ECO:0000315"/>
    <property type="project" value="FlyBase"/>
</dbReference>
<dbReference type="FunFam" id="2.30.230.10:FF:000020">
    <property type="entry name" value="GD21667"/>
    <property type="match status" value="1"/>
</dbReference>
<dbReference type="Gene3D" id="2.30.230.10">
    <property type="entry name" value="Lipovitellin, beta-sheet shell regions, chain A"/>
    <property type="match status" value="1"/>
</dbReference>
<dbReference type="Gene3D" id="1.25.10.20">
    <property type="entry name" value="Vitellinogen, superhelical"/>
    <property type="match status" value="1"/>
</dbReference>
<dbReference type="InterPro" id="IPR015819">
    <property type="entry name" value="Lipid_transp_b-sht_shell"/>
</dbReference>
<dbReference type="InterPro" id="IPR011030">
    <property type="entry name" value="Lipovitellin_superhlx_dom"/>
</dbReference>
<dbReference type="InterPro" id="IPR045811">
    <property type="entry name" value="MTP_lip-bd"/>
</dbReference>
<dbReference type="InterPro" id="IPR039988">
    <property type="entry name" value="MTTP"/>
</dbReference>
<dbReference type="InterPro" id="IPR015816">
    <property type="entry name" value="Vitellinogen_b-sht_N"/>
</dbReference>
<dbReference type="InterPro" id="IPR001747">
    <property type="entry name" value="Vitellogenin_N"/>
</dbReference>
<dbReference type="PANTHER" id="PTHR13024:SF0">
    <property type="entry name" value="MICROSOMAL TRIACYLGLYCEROL TRANSFER PROTEIN"/>
    <property type="match status" value="1"/>
</dbReference>
<dbReference type="PANTHER" id="PTHR13024">
    <property type="entry name" value="MICROSOMAL TRIGLYCERIDE TRANSFER PROTEIN, LARGE SUBUNIT"/>
    <property type="match status" value="1"/>
</dbReference>
<dbReference type="Pfam" id="PF19444">
    <property type="entry name" value="MTP_lip_bd"/>
    <property type="match status" value="1"/>
</dbReference>
<dbReference type="Pfam" id="PF01347">
    <property type="entry name" value="Vitellogenin_N"/>
    <property type="match status" value="1"/>
</dbReference>
<dbReference type="SMART" id="SM00638">
    <property type="entry name" value="LPD_N"/>
    <property type="match status" value="1"/>
</dbReference>
<dbReference type="SUPFAM" id="SSF56968">
    <property type="entry name" value="Lipovitellin-phosvitin complex, beta-sheet shell regions"/>
    <property type="match status" value="1"/>
</dbReference>
<dbReference type="SUPFAM" id="SSF48431">
    <property type="entry name" value="Lipovitellin-phosvitin complex, superhelical domain"/>
    <property type="match status" value="1"/>
</dbReference>
<dbReference type="PROSITE" id="PS51211">
    <property type="entry name" value="VITELLOGENIN"/>
    <property type="match status" value="1"/>
</dbReference>
<protein>
    <recommendedName>
        <fullName evidence="5">Microsomal triacylglycerol transfer protein</fullName>
        <shortName evidence="5">MTP</shortName>
    </recommendedName>
</protein>
<proteinExistence type="evidence at protein level"/>
<comment type="function">
    <text evidence="4">Catalyzes the transport of phospholipids such as phosphatidylethanolamine (1,2-diacyl-sn-glycero-3-phosphoethanolamine) and phosphatidylcholine (1,2-diacyl-sn-glycero-3-phosphocholine) between membranes. Required for the assembly and secretion of plasma lipoproteins that contain apolipoprotein B.</text>
</comment>
<comment type="catalytic activity">
    <reaction evidence="4">
        <text>a 1,2-diacyl-sn-glycero-3-phosphocholine(in) = a 1,2-diacyl-sn-glycero-3-phosphocholine(out)</text>
        <dbReference type="Rhea" id="RHEA:38571"/>
        <dbReference type="ChEBI" id="CHEBI:57643"/>
    </reaction>
</comment>
<comment type="catalytic activity">
    <reaction evidence="4">
        <text>a 1,2-diacyl-sn-glycero-3-phosphoethanolamine(in) = a 1,2-diacyl-sn-glycero-3-phosphoethanolamine(out)</text>
        <dbReference type="Rhea" id="RHEA:38895"/>
        <dbReference type="ChEBI" id="CHEBI:64612"/>
    </reaction>
</comment>
<comment type="subcellular location">
    <subcellularLocation>
        <location evidence="4">Endoplasmic reticulum</location>
    </subcellularLocation>
    <subcellularLocation>
        <location evidence="4">Golgi apparatus</location>
    </subcellularLocation>
</comment>
<accession>Q9VIH3</accession>
<accession>Q961S9</accession>
<feature type="signal peptide" evidence="1">
    <location>
        <begin position="1"/>
        <end position="27"/>
    </location>
</feature>
<feature type="chain" id="PRO_5004334712" description="Microsomal triacylglycerol transfer protein">
    <location>
        <begin position="28"/>
        <end position="886"/>
    </location>
</feature>
<feature type="domain" description="Vitellogenin" evidence="3">
    <location>
        <begin position="30"/>
        <end position="653"/>
    </location>
</feature>
<feature type="glycosylation site" description="N-linked (GlcNAc...) asparagine" evidence="2">
    <location>
        <position position="358"/>
    </location>
</feature>
<feature type="glycosylation site" description="N-linked (GlcNAc...) asparagine" evidence="2">
    <location>
        <position position="484"/>
    </location>
</feature>
<feature type="glycosylation site" description="N-linked (GlcNAc...) asparagine" evidence="2">
    <location>
        <position position="502"/>
    </location>
</feature>
<feature type="glycosylation site" description="N-linked (GlcNAc...) asparagine" evidence="2">
    <location>
        <position position="616"/>
    </location>
</feature>
<feature type="sequence conflict" description="In Ref. 3; AAK84927." evidence="6" ref="3">
    <original>D</original>
    <variation>H</variation>
    <location>
        <position position="65"/>
    </location>
</feature>
<feature type="sequence conflict" description="In Ref. 3; AAK84927." evidence="6" ref="3">
    <original>E</original>
    <variation>D</variation>
    <location>
        <position position="76"/>
    </location>
</feature>
<feature type="sequence conflict" description="In Ref. 3; AAK84927." evidence="6" ref="3">
    <original>E</original>
    <variation>Q</variation>
    <location>
        <position position="148"/>
    </location>
</feature>
<feature type="sequence conflict" description="In Ref. 3; AAK84927." evidence="6" ref="3">
    <original>N</original>
    <variation>H</variation>
    <location>
        <position position="186"/>
    </location>
</feature>
<feature type="sequence conflict" description="In Ref. 3; AAK84927." evidence="6" ref="3">
    <original>A</original>
    <variation>S</variation>
    <location>
        <position position="338"/>
    </location>
</feature>
<feature type="sequence conflict" description="In Ref. 3; AAK84927." evidence="6" ref="3">
    <original>S</original>
    <variation>R</variation>
    <location>
        <position position="372"/>
    </location>
</feature>
<feature type="sequence conflict" description="In Ref. 3; AAK84927." evidence="6" ref="3">
    <original>V</original>
    <variation>L</variation>
    <location>
        <position position="422"/>
    </location>
</feature>
<feature type="sequence conflict" description="In Ref. 3; AAK84927." evidence="6" ref="3">
    <original>A</original>
    <variation>G</variation>
    <location>
        <position position="673"/>
    </location>
</feature>
<organism>
    <name type="scientific">Drosophila melanogaster</name>
    <name type="common">Fruit fly</name>
    <dbReference type="NCBI Taxonomy" id="7227"/>
    <lineage>
        <taxon>Eukaryota</taxon>
        <taxon>Metazoa</taxon>
        <taxon>Ecdysozoa</taxon>
        <taxon>Arthropoda</taxon>
        <taxon>Hexapoda</taxon>
        <taxon>Insecta</taxon>
        <taxon>Pterygota</taxon>
        <taxon>Neoptera</taxon>
        <taxon>Endopterygota</taxon>
        <taxon>Diptera</taxon>
        <taxon>Brachycera</taxon>
        <taxon>Muscomorpha</taxon>
        <taxon>Ephydroidea</taxon>
        <taxon>Drosophilidae</taxon>
        <taxon>Drosophila</taxon>
        <taxon>Sophophora</taxon>
    </lineage>
</organism>
<sequence length="886" mass="98776">MENKNKKCLRTLLLLALFLGLLEDGKTALIAPNSQQIFKLQNQVILQELGRDSSSAETSYTFETDLKINSVWSGDEDQLLEVFISGSKVDASGKARSITRIPDRPFYISLVRGQPDKVIAHTSKDQSLLNLERGIASLLQLRLDASQEEELDVSGLCRVSYNVKSSTKVEKTKRDCSLWDLRVNYNPEEALGVTQQAQETVFYELSSEGTLLHAESQENHRLNLAAKPDVGSFVKSSLILQHVSQGSEEVKQLQLGSLDKAIQSLLEWYRVFELESDVDGMISAIKEQTLEDQLKASLTELQSADVGKSSLALAYVKLIPLARITRQEQFEDLLTEHAEVLPQLVDLLGAVQTFDAHNATFGFLYKESETTSEQLDLLEKYLQSLAVATHPDRKIVEHLFGLLEQESIKKHLKLRESVIQTVATLTRQSGLDVEDPLLKEVRSYLLQGLTSKEPTLYIRALQNLQDPATIEALLEHAQTGEAPNLSVAALQALKAFPLGSFNSSHRLQFESIFYQRKRRFDSSARTLALDIILSLRPTQEQLGNFLDYLASNDRQFEIKTYVLQKLRMLAEKCPRFRALFKSELVKRRHVNNYNVLGQKGLTTVLTRQLSQAPAFNETLLSTQEVYQGILKRGSVEFLLHAGRSQASSFKLGIYTAGLGSLVGDGDSGDGNDAIPADDEFSEDEAVTAGMEISVQGAQLRPLVFFSGQTELMGHVWGGSASDSTPAYQATTLSQDNEHYIILTSGATLHWRVLGARSVDLNGKVGFSLWNRNAQTEIQQNTGSAVLGHLAVGFTYAKLVQDFSITHEPKLSLNADLDFYSGIKLCMQLQRPEQLLKQTNVRSVFLQSVDRPYAKHVRSTLSHKTAGCTFALNQKNNEMCNLIFRDL</sequence>
<name>MTP_DROME</name>
<evidence type="ECO:0000255" key="1"/>
<evidence type="ECO:0000255" key="2">
    <source>
        <dbReference type="PROSITE-ProRule" id="PRU00498"/>
    </source>
</evidence>
<evidence type="ECO:0000255" key="3">
    <source>
        <dbReference type="PROSITE-ProRule" id="PRU00557"/>
    </source>
</evidence>
<evidence type="ECO:0000269" key="4">
    <source>
    </source>
</evidence>
<evidence type="ECO:0000303" key="5">
    <source>
    </source>
</evidence>
<evidence type="ECO:0000305" key="6"/>
<evidence type="ECO:0000312" key="7">
    <source>
        <dbReference type="EMBL" id="AAF53946.2"/>
    </source>
</evidence>
<evidence type="ECO:0000312" key="8">
    <source>
        <dbReference type="FlyBase" id="FBgn0266369"/>
    </source>
</evidence>
<evidence type="ECO:0000312" key="9">
    <source>
        <dbReference type="Proteomes" id="UP000000803"/>
    </source>
</evidence>
<keyword id="KW-0256">Endoplasmic reticulum</keyword>
<keyword id="KW-0325">Glycoprotein</keyword>
<keyword id="KW-0333">Golgi apparatus</keyword>
<keyword id="KW-1185">Reference proteome</keyword>
<keyword id="KW-0732">Signal</keyword>
<keyword id="KW-0813">Transport</keyword>
<gene>
    <name evidence="8" type="primary">Mtp</name>
    <name evidence="8" type="ORF">CG9342</name>
</gene>